<accession>Q4V9H5</accession>
<protein>
    <recommendedName>
        <fullName>PHD finger protein 20-like protein 1</fullName>
    </recommendedName>
</protein>
<gene>
    <name type="primary">Phf20l1</name>
</gene>
<comment type="function">
    <text evidence="1 2">Is a negative regulator of proteasomal degradation of a set of methylated proteins, including DNMT1 and SOX2 (By similarity). Involved in the maintainance of embryonic stem cells pluripotency, through the regulation of SOX2 levels (By similarity).</text>
</comment>
<comment type="subunit">
    <text evidence="1">Interacts with methylated DNMT1 (DNMT1K142me1). Interacts with SOX2.</text>
</comment>
<comment type="subcellular location">
    <subcellularLocation>
        <location evidence="1">Nucleus</location>
    </subcellularLocation>
    <text evidence="1">Localized to the perinucleolar region.</text>
</comment>
<comment type="alternative products">
    <event type="alternative splicing"/>
    <isoform>
        <id>Q4V9H5-1</id>
        <name>1</name>
        <sequence type="displayed"/>
    </isoform>
    <isoform>
        <id>Q4V9H5-2</id>
        <name>2</name>
        <sequence type="described" ref="VSP_040415 VSP_040416 VSP_040417 VSP_040418"/>
    </isoform>
</comment>
<sequence length="1015" mass="114084">MSKKPPNRPGITFEIGARLEALDYLQKWYPSRIEKIDYEEGKMLVHFERWSHRYDEWIYWDSNRLRPLERPSLRKEGLKDEEDLFDFKAGEEVLARWTDCRYYPAKIEAINKEGTFTVQFYDGVIRCLKRMHIKAMPEDAKGQVKSQHPLSWCCPIDPAGSCNQSMGSEDWIALVKAAAAAAAKNKTGSKPRTSANSNKEKERDGGKWFKVPSKKAETSTCIVTAEIEKKEELPTSSEPFGLHIDSVPKIVFPQPESTLTNKRKNNQGNSFQAKRARLNKITGLLASKAVGVDGAEKKEDCSATAPVLEQAISPKPQSQKKNEAVISSSANTQKPALLSSTLSSGKARSKKCKHESGESSGCIKAPKSPLAPELIQAKDLTLVSQLSSVINKTSSPQPVNPPRPCKHSERRRRSQRLATLPMPDDSLEKLSSSSSATDGKVFSISSQNQQESSVPEVPAIAYVPLQKLGPCLPLDLSCGSEVTGSQAPDSSYPGGECPREEKEETPLFANPTSKVVSDVKGAAAATGILKTEKKVKLEEKTSTAFGKRKEKDKERKEKRDKDHYKPKQKKKKKKKKKSKQHDYSDYEDSSLDFLERCSSPLTRSSGSSLAPRSTFTEKTTTYQYPRAILSVDLSGENLSDVEFLDDSSTESLLLSGDEYNQDFDSTNFEESQDEDDALNEIVRCICELDEENGFMIQCEECLCWQHSVCMGLLEDSIPEQYICYICRDPPGQRWNAKYRYDKEWLNNGRMYGLSFVKENYSHLNAKKIVSTHHLLADVYGITEVLHGLQLKIGILKNKHHPDLRLWAYSGKRKDQDQVVAGAERKVILQDTANSEGRKYVQNHKEPPLKMEETYITSEHSYQKPQSFSQDCHSLTDPGSSDDDDVSSFEEDGELHVADNSHLLYSVKERGVSEKNPASENKVFVYNDKKGMEGPGDAHLQWQLNLLTHIENVQNEVTSRMDLIEKEVDVLESWLDFTGELEPPDPLARLPQLKRHIKQLLLDMGKVQQIATLCSV</sequence>
<proteinExistence type="evidence at protein level"/>
<organism>
    <name type="scientific">Rattus norvegicus</name>
    <name type="common">Rat</name>
    <dbReference type="NCBI Taxonomy" id="10116"/>
    <lineage>
        <taxon>Eukaryota</taxon>
        <taxon>Metazoa</taxon>
        <taxon>Chordata</taxon>
        <taxon>Craniata</taxon>
        <taxon>Vertebrata</taxon>
        <taxon>Euteleostomi</taxon>
        <taxon>Mammalia</taxon>
        <taxon>Eutheria</taxon>
        <taxon>Euarchontoglires</taxon>
        <taxon>Glires</taxon>
        <taxon>Rodentia</taxon>
        <taxon>Myomorpha</taxon>
        <taxon>Muroidea</taxon>
        <taxon>Muridae</taxon>
        <taxon>Murinae</taxon>
        <taxon>Rattus</taxon>
    </lineage>
</organism>
<evidence type="ECO:0000250" key="1">
    <source>
        <dbReference type="UniProtKB" id="A8MW92"/>
    </source>
</evidence>
<evidence type="ECO:0000250" key="2">
    <source>
        <dbReference type="UniProtKB" id="Q8CCJ9"/>
    </source>
</evidence>
<evidence type="ECO:0000256" key="3">
    <source>
        <dbReference type="SAM" id="MobiDB-lite"/>
    </source>
</evidence>
<evidence type="ECO:0000303" key="4">
    <source>
    </source>
</evidence>
<evidence type="ECO:0007744" key="5">
    <source>
    </source>
</evidence>
<dbReference type="EMBL" id="AABR03056473">
    <property type="status" value="NOT_ANNOTATED_CDS"/>
    <property type="molecule type" value="Genomic_DNA"/>
</dbReference>
<dbReference type="EMBL" id="AABR03057010">
    <property type="status" value="NOT_ANNOTATED_CDS"/>
    <property type="molecule type" value="Genomic_DNA"/>
</dbReference>
<dbReference type="EMBL" id="AABR03057503">
    <property type="status" value="NOT_ANNOTATED_CDS"/>
    <property type="molecule type" value="Genomic_DNA"/>
</dbReference>
<dbReference type="EMBL" id="AABR03057556">
    <property type="status" value="NOT_ANNOTATED_CDS"/>
    <property type="molecule type" value="Genomic_DNA"/>
</dbReference>
<dbReference type="EMBL" id="AABR03059315">
    <property type="status" value="NOT_ANNOTATED_CDS"/>
    <property type="molecule type" value="Genomic_DNA"/>
</dbReference>
<dbReference type="EMBL" id="AABR03059948">
    <property type="status" value="NOT_ANNOTATED_CDS"/>
    <property type="molecule type" value="Genomic_DNA"/>
</dbReference>
<dbReference type="EMBL" id="BC096896">
    <property type="protein sequence ID" value="AAH96896.1"/>
    <property type="molecule type" value="mRNA"/>
</dbReference>
<dbReference type="RefSeq" id="NP_001258368.1">
    <molecule id="Q4V9H5-1"/>
    <property type="nucleotide sequence ID" value="NM_001271439.1"/>
</dbReference>
<dbReference type="RefSeq" id="XP_008763758.1">
    <property type="nucleotide sequence ID" value="XM_008765536.2"/>
</dbReference>
<dbReference type="SMR" id="Q4V9H5"/>
<dbReference type="FunCoup" id="Q4V9H5">
    <property type="interactions" value="4392"/>
</dbReference>
<dbReference type="STRING" id="10116.ENSRNOP00000076201"/>
<dbReference type="iPTMnet" id="Q4V9H5"/>
<dbReference type="PhosphoSitePlus" id="Q4V9H5"/>
<dbReference type="PaxDb" id="10116-ENSRNOP00000007587"/>
<dbReference type="GeneID" id="314964"/>
<dbReference type="KEGG" id="rno:314964"/>
<dbReference type="UCSC" id="RGD:1560141">
    <molecule id="Q4V9H5-1"/>
    <property type="organism name" value="rat"/>
</dbReference>
<dbReference type="AGR" id="RGD:1560141"/>
<dbReference type="CTD" id="51105"/>
<dbReference type="RGD" id="1560141">
    <property type="gene designation" value="Phf20l1"/>
</dbReference>
<dbReference type="eggNOG" id="KOG1844">
    <property type="taxonomic scope" value="Eukaryota"/>
</dbReference>
<dbReference type="HOGENOM" id="CLU_1053614_0_0_1"/>
<dbReference type="InParanoid" id="Q4V9H5"/>
<dbReference type="PhylomeDB" id="Q4V9H5"/>
<dbReference type="TreeFam" id="TF106475"/>
<dbReference type="Reactome" id="R-RNO-9772755">
    <property type="pathway name" value="Formation of WDR5-containing histone-modifying complexes"/>
</dbReference>
<dbReference type="PRO" id="PR:Q4V9H5"/>
<dbReference type="Proteomes" id="UP000002494">
    <property type="component" value="Chromosome 7"/>
</dbReference>
<dbReference type="Bgee" id="ENSRNOG00000046527">
    <property type="expression patterns" value="Expressed in quadriceps femoris and 18 other cell types or tissues"/>
</dbReference>
<dbReference type="GO" id="GO:0044545">
    <property type="term" value="C:NSL complex"/>
    <property type="evidence" value="ECO:0000318"/>
    <property type="project" value="GO_Central"/>
</dbReference>
<dbReference type="GO" id="GO:0005634">
    <property type="term" value="C:nucleus"/>
    <property type="evidence" value="ECO:0007669"/>
    <property type="project" value="UniProtKB-SubCell"/>
</dbReference>
<dbReference type="GO" id="GO:0140034">
    <property type="term" value="F:methylation-dependent protein binding"/>
    <property type="evidence" value="ECO:0000266"/>
    <property type="project" value="RGD"/>
</dbReference>
<dbReference type="GO" id="GO:0008270">
    <property type="term" value="F:zinc ion binding"/>
    <property type="evidence" value="ECO:0007669"/>
    <property type="project" value="UniProtKB-KW"/>
</dbReference>
<dbReference type="GO" id="GO:0032435">
    <property type="term" value="P:negative regulation of proteasomal ubiquitin-dependent protein catabolic process"/>
    <property type="evidence" value="ECO:0000250"/>
    <property type="project" value="UniProtKB"/>
</dbReference>
<dbReference type="GO" id="GO:0042177">
    <property type="term" value="P:negative regulation of protein catabolic process"/>
    <property type="evidence" value="ECO:0000266"/>
    <property type="project" value="RGD"/>
</dbReference>
<dbReference type="GO" id="GO:0006357">
    <property type="term" value="P:regulation of transcription by RNA polymerase II"/>
    <property type="evidence" value="ECO:0000318"/>
    <property type="project" value="GO_Central"/>
</dbReference>
<dbReference type="CDD" id="cd20104">
    <property type="entry name" value="MBT_PHF20L1-like"/>
    <property type="match status" value="1"/>
</dbReference>
<dbReference type="CDD" id="cd15633">
    <property type="entry name" value="PHD_PHF20L1"/>
    <property type="match status" value="1"/>
</dbReference>
<dbReference type="CDD" id="cd20454">
    <property type="entry name" value="Tudor_PHF20L1"/>
    <property type="match status" value="1"/>
</dbReference>
<dbReference type="FunFam" id="2.30.30.140:FF:000049">
    <property type="entry name" value="PHD finger protein 20 (Predicted)"/>
    <property type="match status" value="1"/>
</dbReference>
<dbReference type="Gene3D" id="2.30.30.140">
    <property type="match status" value="2"/>
</dbReference>
<dbReference type="Gene3D" id="3.30.40.10">
    <property type="entry name" value="Zinc/RING finger domain, C3HC4 (zinc finger)"/>
    <property type="match status" value="1"/>
</dbReference>
<dbReference type="InterPro" id="IPR014002">
    <property type="entry name" value="Agenet_dom_plant"/>
</dbReference>
<dbReference type="InterPro" id="IPR040477">
    <property type="entry name" value="KDM4-like_Tudor"/>
</dbReference>
<dbReference type="InterPro" id="IPR043449">
    <property type="entry name" value="PHF20-like"/>
</dbReference>
<dbReference type="InterPro" id="IPR002999">
    <property type="entry name" value="Tudor"/>
</dbReference>
<dbReference type="InterPro" id="IPR047405">
    <property type="entry name" value="Tudor_PHF20L1"/>
</dbReference>
<dbReference type="InterPro" id="IPR019786">
    <property type="entry name" value="Zinc_finger_PHD-type_CS"/>
</dbReference>
<dbReference type="InterPro" id="IPR011011">
    <property type="entry name" value="Znf_FYVE_PHD"/>
</dbReference>
<dbReference type="InterPro" id="IPR013083">
    <property type="entry name" value="Znf_RING/FYVE/PHD"/>
</dbReference>
<dbReference type="PANTHER" id="PTHR15856:SF26">
    <property type="entry name" value="PHD FINGER PROTEIN 20-LIKE PROTEIN 1"/>
    <property type="match status" value="1"/>
</dbReference>
<dbReference type="PANTHER" id="PTHR15856">
    <property type="entry name" value="PHD FINGER PROTEIN 20-RELATED"/>
    <property type="match status" value="1"/>
</dbReference>
<dbReference type="Pfam" id="PF16660">
    <property type="entry name" value="PHD20L1_u1"/>
    <property type="match status" value="1"/>
</dbReference>
<dbReference type="Pfam" id="PF20826">
    <property type="entry name" value="PHD_5"/>
    <property type="match status" value="1"/>
</dbReference>
<dbReference type="Pfam" id="PF18104">
    <property type="entry name" value="Tudor_2"/>
    <property type="match status" value="1"/>
</dbReference>
<dbReference type="SMART" id="SM00743">
    <property type="entry name" value="Agenet"/>
    <property type="match status" value="2"/>
</dbReference>
<dbReference type="SMART" id="SM00333">
    <property type="entry name" value="TUDOR"/>
    <property type="match status" value="2"/>
</dbReference>
<dbReference type="SUPFAM" id="SSF57903">
    <property type="entry name" value="FYVE/PHD zinc finger"/>
    <property type="match status" value="1"/>
</dbReference>
<dbReference type="SUPFAM" id="SSF63748">
    <property type="entry name" value="Tudor/PWWP/MBT"/>
    <property type="match status" value="2"/>
</dbReference>
<dbReference type="PROSITE" id="PS01359">
    <property type="entry name" value="ZF_PHD_1"/>
    <property type="match status" value="1"/>
</dbReference>
<keyword id="KW-0007">Acetylation</keyword>
<keyword id="KW-0025">Alternative splicing</keyword>
<keyword id="KW-1017">Isopeptide bond</keyword>
<keyword id="KW-0479">Metal-binding</keyword>
<keyword id="KW-0539">Nucleus</keyword>
<keyword id="KW-0597">Phosphoprotein</keyword>
<keyword id="KW-1185">Reference proteome</keyword>
<keyword id="KW-0677">Repeat</keyword>
<keyword id="KW-0832">Ubl conjugation</keyword>
<keyword id="KW-0862">Zinc</keyword>
<keyword id="KW-0863">Zinc-finger</keyword>
<feature type="chain" id="PRO_0000336003" description="PHD finger protein 20-like protein 1">
    <location>
        <begin position="1"/>
        <end position="1015"/>
    </location>
</feature>
<feature type="domain" description="Tudor 1">
    <location>
        <begin position="11"/>
        <end position="71"/>
    </location>
</feature>
<feature type="domain" description="Tudor 2">
    <location>
        <begin position="85"/>
        <end position="141"/>
    </location>
</feature>
<feature type="zinc finger region" description="PHD-type">
    <location>
        <begin position="681"/>
        <end position="729"/>
    </location>
</feature>
<feature type="region of interest" description="Disordered" evidence="3">
    <location>
        <begin position="183"/>
        <end position="206"/>
    </location>
</feature>
<feature type="region of interest" description="Disordered" evidence="3">
    <location>
        <begin position="309"/>
        <end position="367"/>
    </location>
</feature>
<feature type="region of interest" description="Disordered" evidence="3">
    <location>
        <begin position="389"/>
        <end position="455"/>
    </location>
</feature>
<feature type="region of interest" description="Disordered" evidence="3">
    <location>
        <begin position="478"/>
        <end position="513"/>
    </location>
</feature>
<feature type="region of interest" description="Disordered" evidence="3">
    <location>
        <begin position="539"/>
        <end position="585"/>
    </location>
</feature>
<feature type="region of interest" description="Disordered" evidence="3">
    <location>
        <begin position="859"/>
        <end position="889"/>
    </location>
</feature>
<feature type="compositionally biased region" description="Polar residues" evidence="3">
    <location>
        <begin position="186"/>
        <end position="197"/>
    </location>
</feature>
<feature type="compositionally biased region" description="Polar residues" evidence="3">
    <location>
        <begin position="315"/>
        <end position="346"/>
    </location>
</feature>
<feature type="compositionally biased region" description="Basic residues" evidence="3">
    <location>
        <begin position="404"/>
        <end position="415"/>
    </location>
</feature>
<feature type="compositionally biased region" description="Polar residues" evidence="3">
    <location>
        <begin position="443"/>
        <end position="453"/>
    </location>
</feature>
<feature type="compositionally biased region" description="Polar residues" evidence="3">
    <location>
        <begin position="480"/>
        <end position="489"/>
    </location>
</feature>
<feature type="compositionally biased region" description="Basic and acidic residues" evidence="3">
    <location>
        <begin position="539"/>
        <end position="565"/>
    </location>
</feature>
<feature type="compositionally biased region" description="Basic residues" evidence="3">
    <location>
        <begin position="566"/>
        <end position="579"/>
    </location>
</feature>
<feature type="compositionally biased region" description="Polar residues" evidence="3">
    <location>
        <begin position="859"/>
        <end position="878"/>
    </location>
</feature>
<feature type="compositionally biased region" description="Acidic residues" evidence="3">
    <location>
        <begin position="879"/>
        <end position="889"/>
    </location>
</feature>
<feature type="modified residue" description="Phosphoserine" evidence="5">
    <location>
        <position position="368"/>
    </location>
</feature>
<feature type="modified residue" description="Phosphoserine" evidence="1">
    <location>
        <position position="432"/>
    </location>
</feature>
<feature type="modified residue" description="N6-acetyllysine" evidence="1">
    <location>
        <position position="907"/>
    </location>
</feature>
<feature type="cross-link" description="Glycyl lysine isopeptide (Lys-Gly) (interchain with G-Cter in SUMO2)" evidence="1">
    <location>
        <position position="75"/>
    </location>
</feature>
<feature type="cross-link" description="Glycyl lysine isopeptide (Lys-Gly) (interchain with G-Cter in SUMO2)" evidence="1">
    <location>
        <position position="79"/>
    </location>
</feature>
<feature type="cross-link" description="Glycyl lysine isopeptide (Lys-Gly) (interchain with G-Cter in SUMO2)" evidence="1">
    <location>
        <position position="530"/>
    </location>
</feature>
<feature type="cross-link" description="Glycyl lysine isopeptide (Lys-Gly) (interchain with G-Cter in SUMO2)" evidence="1">
    <location>
        <position position="849"/>
    </location>
</feature>
<feature type="splice variant" id="VSP_040415" description="In isoform 2." evidence="4">
    <original>G</original>
    <variation>GQFLF</variation>
    <location>
        <position position="142"/>
    </location>
</feature>
<feature type="splice variant" id="VSP_040416" description="In isoform 2." evidence="4">
    <original>F</original>
    <variation>FV</variation>
    <location>
        <position position="240"/>
    </location>
</feature>
<feature type="splice variant" id="VSP_040417" description="In isoform 2." evidence="4">
    <original>A</original>
    <variation>V</variation>
    <location>
        <position position="311"/>
    </location>
</feature>
<feature type="splice variant" id="VSP_040418" description="In isoform 2." evidence="4">
    <location>
        <begin position="312"/>
        <end position="1015"/>
    </location>
</feature>
<reference key="1">
    <citation type="journal article" date="2004" name="Nature">
        <title>Genome sequence of the Brown Norway rat yields insights into mammalian evolution.</title>
        <authorList>
            <person name="Gibbs R.A."/>
            <person name="Weinstock G.M."/>
            <person name="Metzker M.L."/>
            <person name="Muzny D.M."/>
            <person name="Sodergren E.J."/>
            <person name="Scherer S."/>
            <person name="Scott G."/>
            <person name="Steffen D."/>
            <person name="Worley K.C."/>
            <person name="Burch P.E."/>
            <person name="Okwuonu G."/>
            <person name="Hines S."/>
            <person name="Lewis L."/>
            <person name="Deramo C."/>
            <person name="Delgado O."/>
            <person name="Dugan-Rocha S."/>
            <person name="Miner G."/>
            <person name="Morgan M."/>
            <person name="Hawes A."/>
            <person name="Gill R."/>
            <person name="Holt R.A."/>
            <person name="Adams M.D."/>
            <person name="Amanatides P.G."/>
            <person name="Baden-Tillson H."/>
            <person name="Barnstead M."/>
            <person name="Chin S."/>
            <person name="Evans C.A."/>
            <person name="Ferriera S."/>
            <person name="Fosler C."/>
            <person name="Glodek A."/>
            <person name="Gu Z."/>
            <person name="Jennings D."/>
            <person name="Kraft C.L."/>
            <person name="Nguyen T."/>
            <person name="Pfannkoch C.M."/>
            <person name="Sitter C."/>
            <person name="Sutton G.G."/>
            <person name="Venter J.C."/>
            <person name="Woodage T."/>
            <person name="Smith D."/>
            <person name="Lee H.-M."/>
            <person name="Gustafson E."/>
            <person name="Cahill P."/>
            <person name="Kana A."/>
            <person name="Doucette-Stamm L."/>
            <person name="Weinstock K."/>
            <person name="Fechtel K."/>
            <person name="Weiss R.B."/>
            <person name="Dunn D.M."/>
            <person name="Green E.D."/>
            <person name="Blakesley R.W."/>
            <person name="Bouffard G.G."/>
            <person name="De Jong P.J."/>
            <person name="Osoegawa K."/>
            <person name="Zhu B."/>
            <person name="Marra M."/>
            <person name="Schein J."/>
            <person name="Bosdet I."/>
            <person name="Fjell C."/>
            <person name="Jones S."/>
            <person name="Krzywinski M."/>
            <person name="Mathewson C."/>
            <person name="Siddiqui A."/>
            <person name="Wye N."/>
            <person name="McPherson J."/>
            <person name="Zhao S."/>
            <person name="Fraser C.M."/>
            <person name="Shetty J."/>
            <person name="Shatsman S."/>
            <person name="Geer K."/>
            <person name="Chen Y."/>
            <person name="Abramzon S."/>
            <person name="Nierman W.C."/>
            <person name="Havlak P.H."/>
            <person name="Chen R."/>
            <person name="Durbin K.J."/>
            <person name="Egan A."/>
            <person name="Ren Y."/>
            <person name="Song X.-Z."/>
            <person name="Li B."/>
            <person name="Liu Y."/>
            <person name="Qin X."/>
            <person name="Cawley S."/>
            <person name="Cooney A.J."/>
            <person name="D'Souza L.M."/>
            <person name="Martin K."/>
            <person name="Wu J.Q."/>
            <person name="Gonzalez-Garay M.L."/>
            <person name="Jackson A.R."/>
            <person name="Kalafus K.J."/>
            <person name="McLeod M.P."/>
            <person name="Milosavljevic A."/>
            <person name="Virk D."/>
            <person name="Volkov A."/>
            <person name="Wheeler D.A."/>
            <person name="Zhang Z."/>
            <person name="Bailey J.A."/>
            <person name="Eichler E.E."/>
            <person name="Tuzun E."/>
            <person name="Birney E."/>
            <person name="Mongin E."/>
            <person name="Ureta-Vidal A."/>
            <person name="Woodwark C."/>
            <person name="Zdobnov E."/>
            <person name="Bork P."/>
            <person name="Suyama M."/>
            <person name="Torrents D."/>
            <person name="Alexandersson M."/>
            <person name="Trask B.J."/>
            <person name="Young J.M."/>
            <person name="Huang H."/>
            <person name="Wang H."/>
            <person name="Xing H."/>
            <person name="Daniels S."/>
            <person name="Gietzen D."/>
            <person name="Schmidt J."/>
            <person name="Stevens K."/>
            <person name="Vitt U."/>
            <person name="Wingrove J."/>
            <person name="Camara F."/>
            <person name="Mar Alba M."/>
            <person name="Abril J.F."/>
            <person name="Guigo R."/>
            <person name="Smit A."/>
            <person name="Dubchak I."/>
            <person name="Rubin E.M."/>
            <person name="Couronne O."/>
            <person name="Poliakov A."/>
            <person name="Huebner N."/>
            <person name="Ganten D."/>
            <person name="Goesele C."/>
            <person name="Hummel O."/>
            <person name="Kreitler T."/>
            <person name="Lee Y.-A."/>
            <person name="Monti J."/>
            <person name="Schulz H."/>
            <person name="Zimdahl H."/>
            <person name="Himmelbauer H."/>
            <person name="Lehrach H."/>
            <person name="Jacob H.J."/>
            <person name="Bromberg S."/>
            <person name="Gullings-Handley J."/>
            <person name="Jensen-Seaman M.I."/>
            <person name="Kwitek A.E."/>
            <person name="Lazar J."/>
            <person name="Pasko D."/>
            <person name="Tonellato P.J."/>
            <person name="Twigger S."/>
            <person name="Ponting C.P."/>
            <person name="Duarte J.M."/>
            <person name="Rice S."/>
            <person name="Goodstadt L."/>
            <person name="Beatson S.A."/>
            <person name="Emes R.D."/>
            <person name="Winter E.E."/>
            <person name="Webber C."/>
            <person name="Brandt P."/>
            <person name="Nyakatura G."/>
            <person name="Adetobi M."/>
            <person name="Chiaromonte F."/>
            <person name="Elnitski L."/>
            <person name="Eswara P."/>
            <person name="Hardison R.C."/>
            <person name="Hou M."/>
            <person name="Kolbe D."/>
            <person name="Makova K."/>
            <person name="Miller W."/>
            <person name="Nekrutenko A."/>
            <person name="Riemer C."/>
            <person name="Schwartz S."/>
            <person name="Taylor J."/>
            <person name="Yang S."/>
            <person name="Zhang Y."/>
            <person name="Lindpaintner K."/>
            <person name="Andrews T.D."/>
            <person name="Caccamo M."/>
            <person name="Clamp M."/>
            <person name="Clarke L."/>
            <person name="Curwen V."/>
            <person name="Durbin R.M."/>
            <person name="Eyras E."/>
            <person name="Searle S.M."/>
            <person name="Cooper G.M."/>
            <person name="Batzoglou S."/>
            <person name="Brudno M."/>
            <person name="Sidow A."/>
            <person name="Stone E.A."/>
            <person name="Payseur B.A."/>
            <person name="Bourque G."/>
            <person name="Lopez-Otin C."/>
            <person name="Puente X.S."/>
            <person name="Chakrabarti K."/>
            <person name="Chatterji S."/>
            <person name="Dewey C."/>
            <person name="Pachter L."/>
            <person name="Bray N."/>
            <person name="Yap V.B."/>
            <person name="Caspi A."/>
            <person name="Tesler G."/>
            <person name="Pevzner P.A."/>
            <person name="Haussler D."/>
            <person name="Roskin K.M."/>
            <person name="Baertsch R."/>
            <person name="Clawson H."/>
            <person name="Furey T.S."/>
            <person name="Hinrichs A.S."/>
            <person name="Karolchik D."/>
            <person name="Kent W.J."/>
            <person name="Rosenbloom K.R."/>
            <person name="Trumbower H."/>
            <person name="Weirauch M."/>
            <person name="Cooper D.N."/>
            <person name="Stenson P.D."/>
            <person name="Ma B."/>
            <person name="Brent M."/>
            <person name="Arumugam M."/>
            <person name="Shteynberg D."/>
            <person name="Copley R.R."/>
            <person name="Taylor M.S."/>
            <person name="Riethman H."/>
            <person name="Mudunuri U."/>
            <person name="Peterson J."/>
            <person name="Guyer M."/>
            <person name="Felsenfeld A."/>
            <person name="Old S."/>
            <person name="Mockrin S."/>
            <person name="Collins F.S."/>
        </authorList>
    </citation>
    <scope>NUCLEOTIDE SEQUENCE [LARGE SCALE GENOMIC DNA]</scope>
    <source>
        <strain>Brown Norway</strain>
    </source>
</reference>
<reference key="2">
    <citation type="journal article" date="2004" name="Genome Res.">
        <title>The status, quality, and expansion of the NIH full-length cDNA project: the Mammalian Gene Collection (MGC).</title>
        <authorList>
            <consortium name="The MGC Project Team"/>
        </authorList>
    </citation>
    <scope>NUCLEOTIDE SEQUENCE [LARGE SCALE MRNA] (ISOFORM 2)</scope>
    <source>
        <tissue>Thymus</tissue>
    </source>
</reference>
<reference key="3">
    <citation type="journal article" date="2012" name="Nat. Commun.">
        <title>Quantitative maps of protein phosphorylation sites across 14 different rat organs and tissues.</title>
        <authorList>
            <person name="Lundby A."/>
            <person name="Secher A."/>
            <person name="Lage K."/>
            <person name="Nordsborg N.B."/>
            <person name="Dmytriyev A."/>
            <person name="Lundby C."/>
            <person name="Olsen J.V."/>
        </authorList>
    </citation>
    <scope>PHOSPHORYLATION [LARGE SCALE ANALYSIS] AT SER-368</scope>
    <scope>IDENTIFICATION BY MASS SPECTROMETRY [LARGE SCALE ANALYSIS]</scope>
</reference>
<name>P20L1_RAT</name>